<comment type="function">
    <text evidence="2 5">Vimentins are class-III intermediate filaments found in various non-epithelial cells, especially mesenchymal cells. Vimentin is attached to the nucleus, endoplasmic reticulum, and mitochondria, either laterally or terminally. Plays a role in cell directional movement, orientation, cell sheet organization and Golgi complex polarization at the cell migration front (By similarity). Protects SCRIB from proteasomal degradation and facilitates its localization to intermediate filaments in a cell contact-mediated manner (By similarity).</text>
</comment>
<comment type="function">
    <text evidence="3">Involved with LARP6 in the stabilization of type I collagen mRNAs for CO1A1 and CO1A2.</text>
</comment>
<comment type="subunit">
    <text evidence="3 4 5">Homomer assembled from elementary dimers (By similarity). Identified in complexes that contain VIM, EZR, AHNAK, BFSP1, BFSP2, ANK2, PLEC, PRX and spectrin (By similarity). Interacts with BCAS3 (By similarity). Interacts with LGSN (By similarity). Interacts with SYNM (By similarity). Interacts (via rod region) with PLEC (via CH 1 domain) (By similarity). Interacts with STK33 (By similarity). Interacts with LARP6 (By similarity). Interacts with RAB8B (By similarity). Interacts with TOR1A; the interaction associates TOR1A with the cytoskeleton. Interacts with TOR1AIP1 (By similarity). Interacts with TOR1AIP1 (By similarity). Interacts with DIAPH1 (By similarity). Interacts with EPPK1; interaction is dependent of higher-order structure of intermediate filament (By similarity). Interacts with the non-receptor tyrosine kinase SRMS; the interaction leads to phosphorylation of VIM (By similarity). Interacts with NOD2 (By similarity). Interacts (via head region) with CORO1C (By similarity). Interacts with HDGF (By similarity). Interacts with PRKCE (via phorbol-ester/DAG-type 2 domain) (By similarity). Interacts with BFSP2 (By similarity). Interacts with PPL (By similarity). Interacts with PKP1 and PKP2 (By similarity). Interacts with SCRIB (via PDZ domains); the interaction protects SCRIB from proteasomal degradation and facilitates SCRIB localization to intermediate filaments, the interaction is reduced by cell contact inhibition (By similarity).</text>
</comment>
<comment type="interaction">
    <interactant intactId="EBI-25636029">
        <id>P02543</id>
    </interactant>
    <interactant intactId="EBI-25636086">
        <id>P05991</id>
        <label>N</label>
    </interactant>
    <organismsDiffer>true</organismsDiffer>
    <experiments>4</experiments>
</comment>
<comment type="subcellular location">
    <subcellularLocation>
        <location evidence="3">Cytoplasm</location>
    </subcellularLocation>
    <subcellularLocation>
        <location evidence="3">Cytoplasm</location>
        <location evidence="3">Cytoskeleton</location>
    </subcellularLocation>
    <subcellularLocation>
        <location evidence="5">Nucleus matrix</location>
    </subcellularLocation>
    <subcellularLocation>
        <location evidence="4">Cell membrane</location>
    </subcellularLocation>
</comment>
<comment type="domain">
    <text evidence="3">The central alpha-helical coiled-coil IF rod domain mediates elementary homodimerization.</text>
</comment>
<comment type="domain">
    <text evidence="3">The [IL]-x-C-x-x-[DE] motif is a proposed target motif for cysteine S-nitrosylation mediated by the iNOS-S100A8/A9 transnitrosylase complex.</text>
</comment>
<comment type="PTM">
    <text evidence="3 5">One of the most prominent phosphoproteins in various cells of mesenchymal origin. Phosphorylation is enhanced during cell division, at which time vimentin filaments are significantly reorganized. Phosphorylation by PKN1 inhibits the formation of filaments. Filament disassembly during mitosis is promoted by phosphorylation at Ser-55 as well as by nestin. Phosphorylated at Ser-56 by CDK5 during neutrophil secretion in the cytoplasm. Phosphorylated by STK33. Phosphorylated on tyrosine residues by SRMS.</text>
</comment>
<comment type="PTM">
    <text evidence="3">S-nitrosylation is induced by interferon-gamma and oxidatively-modified low-densitity lipoprotein (LDL(ox)) possibly implicating the iNOS-S100A8/9 transnitrosylase complex.</text>
</comment>
<comment type="similarity">
    <text evidence="7">Belongs to the intermediate filament family.</text>
</comment>
<dbReference type="EMBL" id="CU570641">
    <property type="status" value="NOT_ANNOTATED_CDS"/>
    <property type="molecule type" value="Genomic_DNA"/>
</dbReference>
<dbReference type="PIR" id="S05207">
    <property type="entry name" value="S05207"/>
</dbReference>
<dbReference type="RefSeq" id="XP_005668163.1">
    <property type="nucleotide sequence ID" value="XM_005668106.3"/>
</dbReference>
<dbReference type="SMR" id="P02543"/>
<dbReference type="FunCoup" id="P02543">
    <property type="interactions" value="944"/>
</dbReference>
<dbReference type="IntAct" id="P02543">
    <property type="interactions" value="1"/>
</dbReference>
<dbReference type="STRING" id="9823.ENSSSCP00000031624"/>
<dbReference type="GlyCosmos" id="P02543">
    <property type="glycosylation" value="3 sites, No reported glycans"/>
</dbReference>
<dbReference type="GlyGen" id="P02543">
    <property type="glycosylation" value="3 sites"/>
</dbReference>
<dbReference type="PaxDb" id="9823-ENSSSCP00000011767"/>
<dbReference type="PeptideAtlas" id="P02543"/>
<dbReference type="Ensembl" id="ENSSSCT00000012075.4">
    <property type="protein sequence ID" value="ENSSSCP00000011767.4"/>
    <property type="gene ID" value="ENSSSCG00000011033.5"/>
</dbReference>
<dbReference type="Ensembl" id="ENSSSCT00040054295.1">
    <property type="protein sequence ID" value="ENSSSCP00040022589.1"/>
    <property type="gene ID" value="ENSSSCG00040040033.1"/>
</dbReference>
<dbReference type="Ensembl" id="ENSSSCT00065024421.1">
    <property type="protein sequence ID" value="ENSSSCP00065009974.1"/>
    <property type="gene ID" value="ENSSSCG00065018310.1"/>
</dbReference>
<dbReference type="Ensembl" id="ENSSSCT00070031129.1">
    <property type="protein sequence ID" value="ENSSSCP00070025960.1"/>
    <property type="gene ID" value="ENSSSCG00070015838.1"/>
</dbReference>
<dbReference type="Ensembl" id="ENSSSCT00085012178">
    <property type="protein sequence ID" value="ENSSSCP00085008860"/>
    <property type="gene ID" value="ENSSSCG00085006440"/>
</dbReference>
<dbReference type="Ensembl" id="ENSSSCT00090006636">
    <property type="protein sequence ID" value="ENSSSCP00090004060"/>
    <property type="gene ID" value="ENSSSCG00090003832"/>
</dbReference>
<dbReference type="Ensembl" id="ENSSSCT00105029362">
    <property type="protein sequence ID" value="ENSSSCP00105020420"/>
    <property type="gene ID" value="ENSSSCG00105015225"/>
</dbReference>
<dbReference type="Ensembl" id="ENSSSCT00110038407">
    <property type="protein sequence ID" value="ENSSSCP00110026492"/>
    <property type="gene ID" value="ENSSSCG00110019977"/>
</dbReference>
<dbReference type="Ensembl" id="ENSSSCT00115004981">
    <property type="protein sequence ID" value="ENSSSCP00115004618"/>
    <property type="gene ID" value="ENSSSCG00115002977"/>
</dbReference>
<dbReference type="Ensembl" id="ENSSSCT00130001393">
    <property type="protein sequence ID" value="ENSSSCP00130001093"/>
    <property type="gene ID" value="ENSSSCG00130000712"/>
</dbReference>
<dbReference type="GeneID" id="100522394"/>
<dbReference type="KEGG" id="ssc:100522394"/>
<dbReference type="CTD" id="7431"/>
<dbReference type="VGNC" id="VGNC:95565">
    <property type="gene designation" value="VIM"/>
</dbReference>
<dbReference type="eggNOG" id="KOG0977">
    <property type="taxonomic scope" value="Eukaryota"/>
</dbReference>
<dbReference type="GeneTree" id="ENSGT00940000156146"/>
<dbReference type="HOGENOM" id="CLU_012560_7_4_1"/>
<dbReference type="InParanoid" id="P02543"/>
<dbReference type="OrthoDB" id="2441647at2759"/>
<dbReference type="TreeFam" id="TF330122"/>
<dbReference type="Reactome" id="R-SSC-264870">
    <property type="pathway name" value="Caspase-mediated cleavage of cytoskeletal proteins"/>
</dbReference>
<dbReference type="Reactome" id="R-SSC-390522">
    <property type="pathway name" value="Striated Muscle Contraction"/>
</dbReference>
<dbReference type="Reactome" id="R-SSC-9013422">
    <property type="pathway name" value="RHOBTB1 GTPase cycle"/>
</dbReference>
<dbReference type="Reactome" id="R-SSC-9646399">
    <property type="pathway name" value="Aggrephagy"/>
</dbReference>
<dbReference type="Proteomes" id="UP000008227">
    <property type="component" value="Chromosome 10"/>
</dbReference>
<dbReference type="Proteomes" id="UP000314985">
    <property type="component" value="Chromosome 10"/>
</dbReference>
<dbReference type="Proteomes" id="UP000694570">
    <property type="component" value="Unplaced"/>
</dbReference>
<dbReference type="Proteomes" id="UP000694571">
    <property type="component" value="Unplaced"/>
</dbReference>
<dbReference type="Proteomes" id="UP000694720">
    <property type="component" value="Unplaced"/>
</dbReference>
<dbReference type="Proteomes" id="UP000694722">
    <property type="component" value="Unplaced"/>
</dbReference>
<dbReference type="Proteomes" id="UP000694723">
    <property type="component" value="Unplaced"/>
</dbReference>
<dbReference type="Proteomes" id="UP000694724">
    <property type="component" value="Unplaced"/>
</dbReference>
<dbReference type="Proteomes" id="UP000694725">
    <property type="component" value="Unplaced"/>
</dbReference>
<dbReference type="Proteomes" id="UP000694726">
    <property type="component" value="Unplaced"/>
</dbReference>
<dbReference type="Proteomes" id="UP000694727">
    <property type="component" value="Unplaced"/>
</dbReference>
<dbReference type="Proteomes" id="UP000694728">
    <property type="component" value="Unplaced"/>
</dbReference>
<dbReference type="Bgee" id="ENSSSCG00000011033">
    <property type="expression patterns" value="Expressed in granulosa cell and 43 other cell types or tissues"/>
</dbReference>
<dbReference type="ExpressionAtlas" id="P02543">
    <property type="expression patterns" value="baseline and differential"/>
</dbReference>
<dbReference type="GO" id="GO:0030424">
    <property type="term" value="C:axon"/>
    <property type="evidence" value="ECO:0000318"/>
    <property type="project" value="GO_Central"/>
</dbReference>
<dbReference type="GO" id="GO:0005737">
    <property type="term" value="C:cytoplasm"/>
    <property type="evidence" value="ECO:0000250"/>
    <property type="project" value="UniProtKB"/>
</dbReference>
<dbReference type="GO" id="GO:0005882">
    <property type="term" value="C:intermediate filament"/>
    <property type="evidence" value="ECO:0000250"/>
    <property type="project" value="UniProtKB"/>
</dbReference>
<dbReference type="GO" id="GO:0016363">
    <property type="term" value="C:nuclear matrix"/>
    <property type="evidence" value="ECO:0007669"/>
    <property type="project" value="UniProtKB-SubCell"/>
</dbReference>
<dbReference type="GO" id="GO:0005886">
    <property type="term" value="C:plasma membrane"/>
    <property type="evidence" value="ECO:0000250"/>
    <property type="project" value="UniProtKB"/>
</dbReference>
<dbReference type="GO" id="GO:0005200">
    <property type="term" value="F:structural constituent of cytoskeleton"/>
    <property type="evidence" value="ECO:0000318"/>
    <property type="project" value="GO_Central"/>
</dbReference>
<dbReference type="GO" id="GO:0071222">
    <property type="term" value="P:cellular response to lipopolysaccharide"/>
    <property type="evidence" value="ECO:0000250"/>
    <property type="project" value="UniProtKB"/>
</dbReference>
<dbReference type="GO" id="GO:0071225">
    <property type="term" value="P:cellular response to muramyl dipeptide"/>
    <property type="evidence" value="ECO:0000250"/>
    <property type="project" value="UniProtKB"/>
</dbReference>
<dbReference type="GO" id="GO:0045109">
    <property type="term" value="P:intermediate filament organization"/>
    <property type="evidence" value="ECO:0000250"/>
    <property type="project" value="UniProtKB"/>
</dbReference>
<dbReference type="GO" id="GO:0010634">
    <property type="term" value="P:positive regulation of epithelial cell migration"/>
    <property type="evidence" value="ECO:0000250"/>
    <property type="project" value="UniProtKB"/>
</dbReference>
<dbReference type="FunFam" id="1.20.5.1160:FF:000001">
    <property type="entry name" value="Keratin type II"/>
    <property type="match status" value="1"/>
</dbReference>
<dbReference type="FunFam" id="1.20.5.170:FF:000002">
    <property type="entry name" value="Type I keratin KA11"/>
    <property type="match status" value="1"/>
</dbReference>
<dbReference type="FunFam" id="1.20.5.500:FF:000001">
    <property type="entry name" value="Type II keratin 23"/>
    <property type="match status" value="1"/>
</dbReference>
<dbReference type="Gene3D" id="1.20.5.170">
    <property type="match status" value="1"/>
</dbReference>
<dbReference type="Gene3D" id="1.20.5.500">
    <property type="entry name" value="Single helix bin"/>
    <property type="match status" value="1"/>
</dbReference>
<dbReference type="Gene3D" id="1.20.5.1160">
    <property type="entry name" value="Vasodilator-stimulated phosphoprotein"/>
    <property type="match status" value="1"/>
</dbReference>
<dbReference type="InterPro" id="IPR018039">
    <property type="entry name" value="IF_conserved"/>
</dbReference>
<dbReference type="InterPro" id="IPR039008">
    <property type="entry name" value="IF_rod_dom"/>
</dbReference>
<dbReference type="InterPro" id="IPR006821">
    <property type="entry name" value="Intermed_filament_DNA-bd"/>
</dbReference>
<dbReference type="InterPro" id="IPR050405">
    <property type="entry name" value="Intermediate_filament"/>
</dbReference>
<dbReference type="PANTHER" id="PTHR45652">
    <property type="entry name" value="GLIAL FIBRILLARY ACIDIC PROTEIN"/>
    <property type="match status" value="1"/>
</dbReference>
<dbReference type="PANTHER" id="PTHR45652:SF5">
    <property type="entry name" value="VIMENTIN"/>
    <property type="match status" value="1"/>
</dbReference>
<dbReference type="Pfam" id="PF00038">
    <property type="entry name" value="Filament"/>
    <property type="match status" value="1"/>
</dbReference>
<dbReference type="Pfam" id="PF04732">
    <property type="entry name" value="Filament_head"/>
    <property type="match status" value="1"/>
</dbReference>
<dbReference type="SMART" id="SM01391">
    <property type="entry name" value="Filament"/>
    <property type="match status" value="1"/>
</dbReference>
<dbReference type="SUPFAM" id="SSF64593">
    <property type="entry name" value="Intermediate filament protein, coiled coil region"/>
    <property type="match status" value="2"/>
</dbReference>
<dbReference type="PROSITE" id="PS00226">
    <property type="entry name" value="IF_ROD_1"/>
    <property type="match status" value="1"/>
</dbReference>
<dbReference type="PROSITE" id="PS51842">
    <property type="entry name" value="IF_ROD_2"/>
    <property type="match status" value="1"/>
</dbReference>
<organism>
    <name type="scientific">Sus scrofa</name>
    <name type="common">Pig</name>
    <dbReference type="NCBI Taxonomy" id="9823"/>
    <lineage>
        <taxon>Eukaryota</taxon>
        <taxon>Metazoa</taxon>
        <taxon>Chordata</taxon>
        <taxon>Craniata</taxon>
        <taxon>Vertebrata</taxon>
        <taxon>Euteleostomi</taxon>
        <taxon>Mammalia</taxon>
        <taxon>Eutheria</taxon>
        <taxon>Laurasiatheria</taxon>
        <taxon>Artiodactyla</taxon>
        <taxon>Suina</taxon>
        <taxon>Suidae</taxon>
        <taxon>Sus</taxon>
    </lineage>
</organism>
<feature type="initiator methionine" description="Removed" evidence="3 9">
    <location>
        <position position="1"/>
    </location>
</feature>
<feature type="chain" id="PRO_0000063758" description="Vimentin">
    <location>
        <begin position="2"/>
        <end position="466"/>
    </location>
</feature>
<feature type="domain" description="IF rod" evidence="7">
    <location>
        <begin position="103"/>
        <end position="411"/>
    </location>
</feature>
<feature type="region of interest" description="Disordered" evidence="8">
    <location>
        <begin position="1"/>
        <end position="31"/>
    </location>
</feature>
<feature type="region of interest" description="Head">
    <location>
        <begin position="2"/>
        <end position="95"/>
    </location>
</feature>
<feature type="region of interest" description="Coil 1A">
    <location>
        <begin position="96"/>
        <end position="131"/>
    </location>
</feature>
<feature type="region of interest" description="Linker 1">
    <location>
        <begin position="132"/>
        <end position="153"/>
    </location>
</feature>
<feature type="region of interest" description="Coil 1B">
    <location>
        <begin position="154"/>
        <end position="245"/>
    </location>
</feature>
<feature type="region of interest" description="Linker 12">
    <location>
        <begin position="246"/>
        <end position="268"/>
    </location>
</feature>
<feature type="region of interest" description="Coil 2">
    <location>
        <begin position="269"/>
        <end position="407"/>
    </location>
</feature>
<feature type="region of interest" description="Tail">
    <location>
        <begin position="408"/>
        <end position="466"/>
    </location>
</feature>
<feature type="coiled-coil region">
    <location>
        <begin position="96"/>
        <end position="131"/>
    </location>
</feature>
<feature type="coiled-coil region">
    <location>
        <begin position="154"/>
        <end position="245"/>
    </location>
</feature>
<feature type="coiled-coil region">
    <location>
        <begin position="303"/>
        <end position="407"/>
    </location>
</feature>
<feature type="short sequence motif" description="[IL]-x-C-x-x-[DE] motif" evidence="3">
    <location>
        <begin position="326"/>
        <end position="329"/>
    </location>
</feature>
<feature type="compositionally biased region" description="Low complexity" evidence="8">
    <location>
        <begin position="1"/>
        <end position="13"/>
    </location>
</feature>
<feature type="compositionally biased region" description="Low complexity" evidence="8">
    <location>
        <begin position="20"/>
        <end position="31"/>
    </location>
</feature>
<feature type="site" description="Stutter" evidence="1">
    <location>
        <position position="351"/>
    </location>
</feature>
<feature type="modified residue" description="N-acetylserine" evidence="3">
    <location>
        <position position="2"/>
    </location>
</feature>
<feature type="modified residue" description="Phosphoserine; alternate" evidence="3">
    <location>
        <position position="7"/>
    </location>
</feature>
<feature type="modified residue" description="Phosphoserine" evidence="3">
    <location>
        <position position="8"/>
    </location>
</feature>
<feature type="modified residue" description="Phosphoserine" evidence="3">
    <location>
        <position position="9"/>
    </location>
</feature>
<feature type="modified residue" description="Phosphoserine" evidence="3">
    <location>
        <position position="10"/>
    </location>
</feature>
<feature type="modified residue" description="Phosphothreonine" evidence="3">
    <location>
        <position position="20"/>
    </location>
</feature>
<feature type="modified residue" description="Phosphoserine" evidence="4">
    <location>
        <position position="25"/>
    </location>
</feature>
<feature type="modified residue" description="Phosphoserine" evidence="4">
    <location>
        <position position="26"/>
    </location>
</feature>
<feature type="modified residue" description="Phosphoserine; by PKC; alternate" evidence="3">
    <location>
        <position position="34"/>
    </location>
</feature>
<feature type="modified residue" description="Phosphoserine; by CaMK2, PKA, PKC and ROCK2" evidence="3">
    <location>
        <position position="39"/>
    </location>
</feature>
<feature type="modified residue" description="Phosphoserine" evidence="3">
    <location>
        <position position="42"/>
    </location>
</feature>
<feature type="modified residue" description="Phosphoserine" evidence="4">
    <location>
        <position position="47"/>
    </location>
</feature>
<feature type="modified residue" description="Phosphoserine" evidence="3">
    <location>
        <position position="49"/>
    </location>
</feature>
<feature type="modified residue" description="Phosphoserine" evidence="4">
    <location>
        <position position="51"/>
    </location>
</feature>
<feature type="modified residue" description="Phosphotyrosine" evidence="4">
    <location>
        <position position="53"/>
    </location>
</feature>
<feature type="modified residue" description="Phosphoserine" evidence="5">
    <location>
        <position position="55"/>
    </location>
</feature>
<feature type="modified residue" description="Phosphoserine; by CDK5 and CDK1" evidence="3">
    <location>
        <position position="56"/>
    </location>
</feature>
<feature type="modified residue" description="Phosphotyrosine" evidence="3">
    <location>
        <position position="61"/>
    </location>
</feature>
<feature type="modified residue" description="Phosphoserine" evidence="4">
    <location>
        <position position="66"/>
    </location>
</feature>
<feature type="modified residue" description="Phosphoserine; by AURKB and ROCK2" evidence="3">
    <location>
        <position position="72"/>
    </location>
</feature>
<feature type="modified residue" description="Phosphoserine" evidence="3">
    <location>
        <position position="73"/>
    </location>
</feature>
<feature type="modified residue" description="Phosphoserine" evidence="3">
    <location>
        <position position="87"/>
    </location>
</feature>
<feature type="modified residue" description="Phosphotyrosine" evidence="3">
    <location>
        <position position="117"/>
    </location>
</feature>
<feature type="modified residue" description="N6-acetyllysine; alternate" evidence="3">
    <location>
        <position position="120"/>
    </location>
</feature>
<feature type="modified residue" description="N6-succinyllysine; alternate" evidence="4">
    <location>
        <position position="120"/>
    </location>
</feature>
<feature type="modified residue" description="N6-acetyllysine; alternate" evidence="4">
    <location>
        <position position="129"/>
    </location>
</feature>
<feature type="modified residue" description="N6-succinyllysine; alternate" evidence="4">
    <location>
        <position position="129"/>
    </location>
</feature>
<feature type="modified residue" description="N6-acetyllysine; alternate" evidence="3">
    <location>
        <position position="139"/>
    </location>
</feature>
<feature type="modified residue" description="Phosphoserine" evidence="3">
    <location>
        <position position="144"/>
    </location>
</feature>
<feature type="modified residue" description="N6-acetyllysine" evidence="4">
    <location>
        <position position="168"/>
    </location>
</feature>
<feature type="modified residue" description="N6-acetyllysine; alternate" evidence="4">
    <location>
        <position position="188"/>
    </location>
</feature>
<feature type="modified residue" description="N6-succinyllysine; alternate" evidence="4">
    <location>
        <position position="188"/>
    </location>
</feature>
<feature type="modified residue" description="Phosphoserine" evidence="3">
    <location>
        <position position="214"/>
    </location>
</feature>
<feature type="modified residue" description="N6-acetyllysine; alternate" evidence="4">
    <location>
        <position position="223"/>
    </location>
</feature>
<feature type="modified residue" description="Phosphoserine" evidence="3">
    <location>
        <position position="226"/>
    </location>
</feature>
<feature type="modified residue" description="N6-acetyllysine" evidence="4">
    <location>
        <position position="235"/>
    </location>
</feature>
<feature type="modified residue" description="N6-acetyllysine; alternate" evidence="4">
    <location>
        <position position="294"/>
    </location>
</feature>
<feature type="modified residue" description="N6-succinyllysine; alternate" evidence="4">
    <location>
        <position position="294"/>
    </location>
</feature>
<feature type="modified residue" description="Phosphoserine" evidence="3">
    <location>
        <position position="299"/>
    </location>
</feature>
<feature type="modified residue" description="Phosphoserine" evidence="4">
    <location>
        <position position="325"/>
    </location>
</feature>
<feature type="modified residue" description="N6-acetyllysine; alternate" evidence="3">
    <location>
        <position position="373"/>
    </location>
</feature>
<feature type="modified residue" description="Phosphoserine" evidence="3">
    <location>
        <position position="409"/>
    </location>
</feature>
<feature type="modified residue" description="Phosphoserine" evidence="6">
    <location>
        <position position="412"/>
    </location>
</feature>
<feature type="modified residue" description="Phosphoserine" evidence="3">
    <location>
        <position position="419"/>
    </location>
</feature>
<feature type="modified residue" description="Phosphoserine" evidence="3">
    <location>
        <position position="420"/>
    </location>
</feature>
<feature type="modified residue" description="Phosphothreonine" evidence="3">
    <location>
        <position position="426"/>
    </location>
</feature>
<feature type="modified residue" description="Phosphoserine" evidence="3">
    <location>
        <position position="430"/>
    </location>
</feature>
<feature type="modified residue" description="Phosphothreonine" evidence="3">
    <location>
        <position position="436"/>
    </location>
</feature>
<feature type="modified residue" description="Phosphoserine" evidence="3">
    <location>
        <position position="438"/>
    </location>
</feature>
<feature type="modified residue" description="N6-acetyllysine; alternate" evidence="3">
    <location>
        <position position="445"/>
    </location>
</feature>
<feature type="modified residue" description="N6-succinyllysine; alternate" evidence="4">
    <location>
        <position position="445"/>
    </location>
</feature>
<feature type="modified residue" description="Phosphothreonine" evidence="3">
    <location>
        <position position="446"/>
    </location>
</feature>
<feature type="modified residue" description="Phosphothreonine" evidence="3">
    <location>
        <position position="458"/>
    </location>
</feature>
<feature type="modified residue" description="Phosphoserine" evidence="3">
    <location>
        <position position="459"/>
    </location>
</feature>
<feature type="glycosylation site" description="O-linked (GlcNAc) serine; alternate" evidence="1">
    <location>
        <position position="7"/>
    </location>
</feature>
<feature type="glycosylation site" description="O-linked (GlcNAc) threonine" evidence="1">
    <location>
        <position position="33"/>
    </location>
</feature>
<feature type="glycosylation site" description="O-linked (GlcNAc) serine; alternate" evidence="1">
    <location>
        <position position="34"/>
    </location>
</feature>
<feature type="cross-link" description="Glycyl lysine isopeptide (Lys-Gly) (interchain with G-Cter in SUMO2)" evidence="3">
    <location>
        <position position="104"/>
    </location>
</feature>
<feature type="cross-link" description="Glycyl lysine isopeptide (Lys-Gly) (interchain with G-Cter in SUMO2); alternate" evidence="3">
    <location>
        <position position="120"/>
    </location>
</feature>
<feature type="cross-link" description="Glycyl lysine isopeptide (Lys-Gly) (interchain with G-Cter in SUMO2); alternate" evidence="3">
    <location>
        <position position="129"/>
    </location>
</feature>
<feature type="cross-link" description="Glycyl lysine isopeptide (Lys-Gly) (interchain with G-Cter in SUMO2); alternate" evidence="3">
    <location>
        <position position="139"/>
    </location>
</feature>
<feature type="cross-link" description="Glycyl lysine isopeptide (Lys-Gly) (interchain with G-Cter in SUMO2); alternate" evidence="3">
    <location>
        <position position="223"/>
    </location>
</feature>
<feature type="cross-link" description="Glycyl lysine isopeptide (Lys-Gly) (interchain with G-Cter in SUMO2)" evidence="3">
    <location>
        <position position="262"/>
    </location>
</feature>
<feature type="cross-link" description="Glycyl lysine isopeptide (Lys-Gly) (interchain with G-Cter in SUMO2); alternate" evidence="3">
    <location>
        <position position="294"/>
    </location>
</feature>
<feature type="cross-link" description="Glycyl lysine isopeptide (Lys-Gly) (interchain with G-Cter in SUMO2)" evidence="3">
    <location>
        <position position="313"/>
    </location>
</feature>
<feature type="cross-link" description="Glycyl lysine isopeptide (Lys-Gly) (interchain with G-Cter in SUMO2); alternate" evidence="3">
    <location>
        <position position="373"/>
    </location>
</feature>
<feature type="cross-link" description="Glycyl lysine isopeptide (Lys-Gly) (interchain with G-Cter in SUMO2)" evidence="3">
    <location>
        <position position="439"/>
    </location>
</feature>
<feature type="cross-link" description="Glycyl lysine isopeptide (Lys-Gly) (interchain with G-Cter in SUMO1); alternate" evidence="3">
    <location>
        <position position="445"/>
    </location>
</feature>
<feature type="cross-link" description="Glycyl lysine isopeptide (Lys-Gly) (interchain with G-Cter in SUMO2); alternate" evidence="3">
    <location>
        <position position="445"/>
    </location>
</feature>
<feature type="sequence conflict" description="In Ref. 2; AA sequence." evidence="10" ref="2">
    <original>Y</original>
    <variation>S</variation>
    <location>
        <position position="53"/>
    </location>
</feature>
<feature type="sequence conflict" description="In Ref. 2; AA sequence." evidence="10" ref="2">
    <original>V</original>
    <variation>VGY</variation>
    <location>
        <position position="60"/>
    </location>
</feature>
<feature type="sequence conflict" description="In Ref. 4; AA sequence." evidence="10" ref="4">
    <original>D</original>
    <variation>N</variation>
    <location>
        <position position="463"/>
    </location>
</feature>
<keyword id="KW-0007">Acetylation</keyword>
<keyword id="KW-1003">Cell membrane</keyword>
<keyword id="KW-0175">Coiled coil</keyword>
<keyword id="KW-0963">Cytoplasm</keyword>
<keyword id="KW-0206">Cytoskeleton</keyword>
<keyword id="KW-0903">Direct protein sequencing</keyword>
<keyword id="KW-0325">Glycoprotein</keyword>
<keyword id="KW-0403">Intermediate filament</keyword>
<keyword id="KW-1017">Isopeptide bond</keyword>
<keyword id="KW-0472">Membrane</keyword>
<keyword id="KW-0539">Nucleus</keyword>
<keyword id="KW-0597">Phosphoprotein</keyword>
<keyword id="KW-1185">Reference proteome</keyword>
<keyword id="KW-0702">S-nitrosylation</keyword>
<keyword id="KW-0832">Ubl conjugation</keyword>
<accession>P02543</accession>
<accession>F1RWB8</accession>
<accession>F1RWC0</accession>
<gene>
    <name type="primary">VIM</name>
</gene>
<proteinExistence type="evidence at protein level"/>
<name>VIME_PIG</name>
<evidence type="ECO:0000250" key="1"/>
<evidence type="ECO:0000250" key="2">
    <source>
        <dbReference type="UniProtKB" id="A0A8C0N8E3"/>
    </source>
</evidence>
<evidence type="ECO:0000250" key="3">
    <source>
        <dbReference type="UniProtKB" id="P08670"/>
    </source>
</evidence>
<evidence type="ECO:0000250" key="4">
    <source>
        <dbReference type="UniProtKB" id="P20152"/>
    </source>
</evidence>
<evidence type="ECO:0000250" key="5">
    <source>
        <dbReference type="UniProtKB" id="P31000"/>
    </source>
</evidence>
<evidence type="ECO:0000250" key="6">
    <source>
        <dbReference type="UniProtKB" id="P84198"/>
    </source>
</evidence>
<evidence type="ECO:0000255" key="7">
    <source>
        <dbReference type="PROSITE-ProRule" id="PRU01188"/>
    </source>
</evidence>
<evidence type="ECO:0000256" key="8">
    <source>
        <dbReference type="SAM" id="MobiDB-lite"/>
    </source>
</evidence>
<evidence type="ECO:0000269" key="9">
    <source>
    </source>
</evidence>
<evidence type="ECO:0000305" key="10"/>
<sequence length="466" mass="53668">MSTRTVSSSSYRRMFGGPGTASRPSSSRSYVTTSTRTYSLGSALRPSTSRSLYTSSPGGVYATRSSAVRLRSSVPGVRLLQDAVDFSLADAINTEFKNTRTNEKVELQELNDRFANYIDKVRFLEQQNKILLAELEQLKGQGKSRLGDLYEEEMRELRRQVDQLTNDKARVEVERDNLAEDIMRLREKLQEETLQREEAESTLQSFRQDVDNASLARLDLERKVESLQEEIAFLKKLHDEEIQELQAQIQEQHVQIDMDVSKPDLTAALRDVRQQYESVAAKNLQEAEEWYKSKFADLSEAANRNNDALRQAKQESNEYRRQVQSLTCEVDALKGTNESLERQMREMEENFAVEAANYQDTIGRLQDEIQNMKEEMARHLREYQDLLNVKMALDIEIATYRKLLEGEESRISLPLPNFSSLNLRETNLESLPLVDTHSKRTLLIKTVETRDGQVINETSQHHDDLE</sequence>
<reference key="1">
    <citation type="submission" date="2009-11" db="EMBL/GenBank/DDBJ databases">
        <authorList>
            <consortium name="Porcine genome sequencing project"/>
        </authorList>
    </citation>
    <scope>NUCLEOTIDE SEQUENCE [LARGE SCALE GENOMIC DNA]</scope>
</reference>
<reference key="2">
    <citation type="journal article" date="1983" name="FEBS Lett.">
        <title>Amino acid sequence characterization of mammalian vimentin, the mesenchymal intermediate filament protein.</title>
        <authorList>
            <person name="Geisler N."/>
            <person name="Plessmann U."/>
            <person name="Weber K."/>
        </authorList>
    </citation>
    <scope>PROTEIN SEQUENCE OF 2-99</scope>
    <source>
        <tissue>Lens</tissue>
    </source>
</reference>
<reference key="3">
    <citation type="journal article" date="1982" name="Nature">
        <title>Related amino acid sequences in neurofilaments and non-neural intermediate filaments.</title>
        <authorList>
            <person name="Geisler N."/>
            <person name="Plessmann U."/>
            <person name="Weber K."/>
        </authorList>
    </citation>
    <scope>PROTEIN SEQUENCE OF 290-327</scope>
    <source>
        <tissue>Lens</tissue>
    </source>
</reference>
<reference key="4">
    <citation type="journal article" date="1981" name="Proc. Natl. Acad. Sci. U.S.A.">
        <title>Comparison of the proteins of two immunologically distinct intermediate-sized filaments by amino acid sequence analysis: desmin and vimentin.</title>
        <authorList>
            <person name="Geisler N."/>
            <person name="Weber K."/>
        </authorList>
    </citation>
    <scope>PROTEIN SEQUENCE OF 328-466</scope>
    <source>
        <tissue>Lens</tissue>
    </source>
</reference>
<protein>
    <recommendedName>
        <fullName>Vimentin</fullName>
    </recommendedName>
</protein>